<sequence>MLLQAFIFLLAGFAAKISALMTNETSDRPLVHFTPNKGWMNDPNGLWYDAKEGKWHLYFQYNPNDTVWGLPLFW</sequence>
<proteinExistence type="inferred from homology"/>
<name>INV3_YEASX</name>
<protein>
    <recommendedName>
        <fullName>Invertase 3</fullName>
        <ecNumber>3.2.1.26</ecNumber>
    </recommendedName>
    <alternativeName>
        <fullName>Beta-fructofuranosidase 3</fullName>
    </alternativeName>
    <alternativeName>
        <fullName>Saccharase</fullName>
    </alternativeName>
</protein>
<gene>
    <name type="primary">SUC3</name>
</gene>
<evidence type="ECO:0000250" key="1"/>
<evidence type="ECO:0000255" key="2"/>
<evidence type="ECO:0000255" key="3">
    <source>
        <dbReference type="PROSITE-ProRule" id="PRU10067"/>
    </source>
</evidence>
<evidence type="ECO:0000305" key="4"/>
<reference key="1">
    <citation type="journal article" date="1988" name="Mol. Gen. Genet.">
        <title>Structural analysis of the 5' regions of yeast SUC genes revealed analogous palindromes in SUC, MAL and GAL.</title>
        <authorList>
            <person name="Hohmann S."/>
            <person name="Gozalbo D."/>
        </authorList>
    </citation>
    <scope>NUCLEOTIDE SEQUENCE [GENOMIC DNA]</scope>
</reference>
<dbReference type="EC" id="3.2.1.26"/>
<dbReference type="EMBL" id="X07571">
    <property type="protein sequence ID" value="CAA30458.1"/>
    <property type="molecule type" value="Genomic_DNA"/>
</dbReference>
<dbReference type="PIR" id="S25439">
    <property type="entry name" value="S25439"/>
</dbReference>
<dbReference type="SMR" id="P10595"/>
<dbReference type="CAZy" id="GH32">
    <property type="family name" value="Glycoside Hydrolase Family 32"/>
</dbReference>
<dbReference type="GlyCosmos" id="P10595">
    <property type="glycosylation" value="2 sites, No reported glycans"/>
</dbReference>
<dbReference type="SGD" id="S000029532">
    <property type="gene designation" value="SUC3"/>
</dbReference>
<dbReference type="VEuPathDB" id="FungiDB:YIL162W"/>
<dbReference type="GO" id="GO:0005576">
    <property type="term" value="C:extracellular region"/>
    <property type="evidence" value="ECO:0000305"/>
    <property type="project" value="SGD"/>
</dbReference>
<dbReference type="GO" id="GO:0000324">
    <property type="term" value="C:fungal-type vacuole"/>
    <property type="evidence" value="ECO:0007669"/>
    <property type="project" value="TreeGrafter"/>
</dbReference>
<dbReference type="GO" id="GO:0004564">
    <property type="term" value="F:beta-fructofuranosidase activity"/>
    <property type="evidence" value="ECO:0000314"/>
    <property type="project" value="SGD"/>
</dbReference>
<dbReference type="GO" id="GO:0004575">
    <property type="term" value="F:sucrose alpha-glucosidase activity"/>
    <property type="evidence" value="ECO:0007669"/>
    <property type="project" value="TreeGrafter"/>
</dbReference>
<dbReference type="GO" id="GO:0036008">
    <property type="term" value="P:sucrose catabolic process to fructose-6-phosphate and glucose-6-phosphate"/>
    <property type="evidence" value="ECO:0000314"/>
    <property type="project" value="SGD"/>
</dbReference>
<dbReference type="Gene3D" id="2.115.10.20">
    <property type="entry name" value="Glycosyl hydrolase domain, family 43"/>
    <property type="match status" value="1"/>
</dbReference>
<dbReference type="InterPro" id="IPR018053">
    <property type="entry name" value="Glyco_hydro_32_AS"/>
</dbReference>
<dbReference type="InterPro" id="IPR013148">
    <property type="entry name" value="Glyco_hydro_32_N"/>
</dbReference>
<dbReference type="InterPro" id="IPR023296">
    <property type="entry name" value="Glyco_hydro_beta-prop_sf"/>
</dbReference>
<dbReference type="PANTHER" id="PTHR42800">
    <property type="entry name" value="EXOINULINASE INUD (AFU_ORTHOLOGUE AFUA_5G00480)"/>
    <property type="match status" value="1"/>
</dbReference>
<dbReference type="PANTHER" id="PTHR42800:SF4">
    <property type="entry name" value="INVERTASE 2"/>
    <property type="match status" value="1"/>
</dbReference>
<dbReference type="Pfam" id="PF00251">
    <property type="entry name" value="Glyco_hydro_32N"/>
    <property type="match status" value="1"/>
</dbReference>
<dbReference type="SUPFAM" id="SSF75005">
    <property type="entry name" value="Arabinanase/levansucrase/invertase"/>
    <property type="match status" value="1"/>
</dbReference>
<dbReference type="PROSITE" id="PS00609">
    <property type="entry name" value="GLYCOSYL_HYDROL_F32"/>
    <property type="match status" value="1"/>
</dbReference>
<organism>
    <name type="scientific">Saccharomyces cerevisiae</name>
    <name type="common">Baker's yeast</name>
    <dbReference type="NCBI Taxonomy" id="4932"/>
    <lineage>
        <taxon>Eukaryota</taxon>
        <taxon>Fungi</taxon>
        <taxon>Dikarya</taxon>
        <taxon>Ascomycota</taxon>
        <taxon>Saccharomycotina</taxon>
        <taxon>Saccharomycetes</taxon>
        <taxon>Saccharomycetales</taxon>
        <taxon>Saccharomycetaceae</taxon>
        <taxon>Saccharomyces</taxon>
    </lineage>
</organism>
<feature type="signal peptide">
    <location>
        <begin position="1"/>
        <end position="19"/>
    </location>
</feature>
<feature type="chain" id="PRO_0000033401" description="Invertase 3">
    <location>
        <begin position="20"/>
        <end position="74" status="greater than"/>
    </location>
</feature>
<feature type="active site" evidence="3">
    <location>
        <position position="42"/>
    </location>
</feature>
<feature type="binding site" evidence="1">
    <location>
        <begin position="39"/>
        <end position="42"/>
    </location>
    <ligand>
        <name>substrate</name>
    </ligand>
</feature>
<feature type="binding site" evidence="1">
    <location>
        <position position="60"/>
    </location>
    <ligand>
        <name>substrate</name>
    </ligand>
</feature>
<feature type="glycosylation site" description="N-linked (GlcNAc...) asparagine" evidence="2">
    <location>
        <position position="23"/>
    </location>
</feature>
<feature type="glycosylation site" description="N-linked (GlcNAc...) asparagine" evidence="2">
    <location>
        <position position="64"/>
    </location>
</feature>
<feature type="non-terminal residue">
    <location>
        <position position="74"/>
    </location>
</feature>
<keyword id="KW-0325">Glycoprotein</keyword>
<keyword id="KW-0326">Glycosidase</keyword>
<keyword id="KW-0378">Hydrolase</keyword>
<keyword id="KW-0732">Signal</keyword>
<comment type="catalytic activity">
    <reaction evidence="3">
        <text>Hydrolysis of terminal non-reducing beta-D-fructofuranoside residues in beta-D-fructofuranosides.</text>
        <dbReference type="EC" id="3.2.1.26"/>
    </reaction>
</comment>
<comment type="similarity">
    <text evidence="4">Belongs to the glycosyl hydrolase 32 family.</text>
</comment>
<accession>P10595</accession>